<reference evidence="6 8" key="1">
    <citation type="journal article" date="2011" name="Insect Biochem. Mol. Biol.">
        <title>Asian corn borer pheromone binding protein 3, a candidate for evolving specificity to the 12-tetradecenyl acetate sex pheromone.</title>
        <authorList>
            <person name="Allen J.E."/>
            <person name="Wanner K.W."/>
        </authorList>
    </citation>
    <scope>NUCLEOTIDE SEQUENCE [MRNA]</scope>
    <scope>TISSUE SPECIFICITY</scope>
    <scope>VARIANT VAL-477</scope>
    <source>
        <strain evidence="8">Bivoltine E</strain>
        <strain evidence="7">Univoltine Z</strain>
        <tissue evidence="4">Antenna</tissue>
    </source>
</reference>
<keyword id="KW-1003">Cell membrane</keyword>
<keyword id="KW-1015">Disulfide bond</keyword>
<keyword id="KW-0325">Glycoprotein</keyword>
<keyword id="KW-0472">Membrane</keyword>
<keyword id="KW-0552">Olfaction</keyword>
<keyword id="KW-0675">Receptor</keyword>
<keyword id="KW-0716">Sensory transduction</keyword>
<keyword id="KW-0812">Transmembrane</keyword>
<keyword id="KW-1133">Transmembrane helix</keyword>
<protein>
    <recommendedName>
        <fullName evidence="8">Sensory neuron membrane protein 1</fullName>
    </recommendedName>
</protein>
<organism>
    <name type="scientific">Ostrinia nubilalis</name>
    <name type="common">European corn borer</name>
    <name type="synonym">Pyralis nubilalis</name>
    <dbReference type="NCBI Taxonomy" id="29057"/>
    <lineage>
        <taxon>Eukaryota</taxon>
        <taxon>Metazoa</taxon>
        <taxon>Ecdysozoa</taxon>
        <taxon>Arthropoda</taxon>
        <taxon>Hexapoda</taxon>
        <taxon>Insecta</taxon>
        <taxon>Pterygota</taxon>
        <taxon>Neoptera</taxon>
        <taxon>Endopterygota</taxon>
        <taxon>Lepidoptera</taxon>
        <taxon>Glossata</taxon>
        <taxon>Ditrysia</taxon>
        <taxon>Pyraloidea</taxon>
        <taxon>Crambidae</taxon>
        <taxon>Pyraustinae</taxon>
        <taxon>Ostrinia</taxon>
    </lineage>
</organism>
<accession>E5EZW6</accession>
<accession>E5EZW5</accession>
<name>SNMP1_OSTNU</name>
<feature type="chain" id="PRO_0000408254" description="Sensory neuron membrane protein 1">
    <location>
        <begin position="1"/>
        <end position="527"/>
    </location>
</feature>
<feature type="topological domain" description="Cytoplasmic" evidence="3">
    <location>
        <begin position="1"/>
        <end position="10"/>
    </location>
</feature>
<feature type="transmembrane region" description="Helical" evidence="3">
    <location>
        <begin position="11"/>
        <end position="31"/>
    </location>
</feature>
<feature type="topological domain" description="Extracellular" evidence="3">
    <location>
        <begin position="32"/>
        <end position="456"/>
    </location>
</feature>
<feature type="transmembrane region" description="Helical" evidence="3">
    <location>
        <begin position="457"/>
        <end position="477"/>
    </location>
</feature>
<feature type="topological domain" description="Cytoplasmic" evidence="3">
    <location>
        <begin position="478"/>
        <end position="527"/>
    </location>
</feature>
<feature type="glycosylation site" description="N-linked (GlcNAc...) asparagine" evidence="3">
    <location>
        <position position="67"/>
    </location>
</feature>
<feature type="glycosylation site" description="N-linked (GlcNAc...) asparagine" evidence="3">
    <location>
        <position position="229"/>
    </location>
</feature>
<feature type="glycosylation site" description="N-linked (GlcNAc...) asparagine" evidence="3">
    <location>
        <position position="440"/>
    </location>
</feature>
<feature type="disulfide bond" evidence="2">
    <location>
        <begin position="268"/>
        <end position="333"/>
    </location>
</feature>
<feature type="disulfide bond" evidence="2">
    <location>
        <begin position="297"/>
        <end position="352"/>
    </location>
</feature>
<feature type="disulfide bond" evidence="2">
    <location>
        <begin position="335"/>
        <end position="341"/>
    </location>
</feature>
<feature type="sequence variant" evidence="4">
    <original>L</original>
    <variation>V</variation>
    <location>
        <position position="477"/>
    </location>
</feature>
<proteinExistence type="evidence at transcript level"/>
<sequence length="527" mass="59539">MQLQKPLKIGLGMMGAGLFGIIFGWVLFPVILKSQLKKEMALSKKTDVRAMWEKIPFALDFKVYMFNYTNVEEIMKGAAPIVKEIGPFHFDEWKEKVDIEDHDEDDTITYKKRDYFYFRPDKSGPGLTGEEVVVMPHLLMLSMATIVNNDKPAMLNMLGKAFNGIFDEPKDIFMRVKVLDLLFRGIIINCARTEFAPKAVCTALKKEGATGMTFEPNNQFRFSLFGMRNGTIDPHVVTVRRGIKNVMDVGKVIAIDGKTEQDVWRDKCNEFEGTDGTVFPPFLTEKDNLESFSGDLCRSFKPWYQKKTSYRGIKTNRYVANIGDFANDPELQCYCDSPDKCPPKGLMDLMKCMKAPMYASLPHYLDSDPQLLKDVKGLSPDANEHGIEIDFEPISGTPMVAKQRVQFNIILLKADKMDLIKDLPGTMTPLFWIEEGLALNKTFVKMLKNQLFIPKRIVSVVKWLLAGVGFVGLVGSLVYQFKGKMINFALSPSSAPVTKVNPEINQQNQPKDISIIGESQNPPKVDM</sequence>
<evidence type="ECO:0000250" key="1">
    <source>
        <dbReference type="UniProtKB" id="O02351"/>
    </source>
</evidence>
<evidence type="ECO:0000250" key="2">
    <source>
        <dbReference type="UniProtKB" id="P26201"/>
    </source>
</evidence>
<evidence type="ECO:0000255" key="3"/>
<evidence type="ECO:0000269" key="4">
    <source>
    </source>
</evidence>
<evidence type="ECO:0000303" key="5">
    <source>
    </source>
</evidence>
<evidence type="ECO:0000305" key="6"/>
<evidence type="ECO:0000312" key="7">
    <source>
        <dbReference type="EMBL" id="ADQ73892.1"/>
    </source>
</evidence>
<evidence type="ECO:0000312" key="8">
    <source>
        <dbReference type="EMBL" id="ADQ73893.1"/>
    </source>
</evidence>
<gene>
    <name evidence="5" type="primary">SNMP1</name>
</gene>
<comment type="function">
    <text evidence="1">Plays an olfactory role that is not restricted to pheromone sensitivity.</text>
</comment>
<comment type="subcellular location">
    <subcellularLocation>
        <location evidence="1">Cell membrane</location>
        <topology evidence="1">Multi-pass membrane protein</topology>
    </subcellularLocation>
</comment>
<comment type="tissue specificity">
    <text evidence="4">Principal component of the olfactory cilia membrane. Localizes to the antennal tissue with two to three fold higher expression in males compared to females.</text>
</comment>
<comment type="similarity">
    <text evidence="6">Belongs to the CD36 family.</text>
</comment>
<dbReference type="EMBL" id="HM044389">
    <property type="protein sequence ID" value="ADQ73893.1"/>
    <property type="molecule type" value="mRNA"/>
</dbReference>
<dbReference type="EMBL" id="HM044388">
    <property type="protein sequence ID" value="ADQ73892.1"/>
    <property type="molecule type" value="mRNA"/>
</dbReference>
<dbReference type="SMR" id="E5EZW6"/>
<dbReference type="GlyCosmos" id="E5EZW6">
    <property type="glycosylation" value="3 sites, No reported glycans"/>
</dbReference>
<dbReference type="GO" id="GO:0005737">
    <property type="term" value="C:cytoplasm"/>
    <property type="evidence" value="ECO:0007669"/>
    <property type="project" value="TreeGrafter"/>
</dbReference>
<dbReference type="GO" id="GO:0005886">
    <property type="term" value="C:plasma membrane"/>
    <property type="evidence" value="ECO:0007669"/>
    <property type="project" value="UniProtKB-SubCell"/>
</dbReference>
<dbReference type="GO" id="GO:0005044">
    <property type="term" value="F:scavenger receptor activity"/>
    <property type="evidence" value="ECO:0007669"/>
    <property type="project" value="TreeGrafter"/>
</dbReference>
<dbReference type="GO" id="GO:0007608">
    <property type="term" value="P:sensory perception of smell"/>
    <property type="evidence" value="ECO:0007669"/>
    <property type="project" value="UniProtKB-KW"/>
</dbReference>
<dbReference type="InterPro" id="IPR002159">
    <property type="entry name" value="CD36_fam"/>
</dbReference>
<dbReference type="PANTHER" id="PTHR11923">
    <property type="entry name" value="SCAVENGER RECEPTOR CLASS B TYPE-1 SR-B1"/>
    <property type="match status" value="1"/>
</dbReference>
<dbReference type="PANTHER" id="PTHR11923:SF69">
    <property type="entry name" value="SENSORY NEURON MEMBRANE PROTEIN 1"/>
    <property type="match status" value="1"/>
</dbReference>
<dbReference type="Pfam" id="PF01130">
    <property type="entry name" value="CD36"/>
    <property type="match status" value="1"/>
</dbReference>
<dbReference type="PRINTS" id="PR01609">
    <property type="entry name" value="CD36FAMILY"/>
</dbReference>